<keyword id="KW-0028">Amino-acid biosynthesis</keyword>
<keyword id="KW-0963">Cytoplasm</keyword>
<keyword id="KW-0521">NADP</keyword>
<keyword id="KW-0560">Oxidoreductase</keyword>
<keyword id="KW-0641">Proline biosynthesis</keyword>
<keyword id="KW-1185">Reference proteome</keyword>
<dbReference type="EC" id="1.5.1.2" evidence="1"/>
<dbReference type="EMBL" id="AE000516">
    <property type="protein sequence ID" value="AAK44743.1"/>
    <property type="molecule type" value="Genomic_DNA"/>
</dbReference>
<dbReference type="PIR" id="G70745">
    <property type="entry name" value="G70745"/>
</dbReference>
<dbReference type="SMR" id="P9WHU6"/>
<dbReference type="KEGG" id="mtc:MT0520"/>
<dbReference type="PATRIC" id="fig|83331.31.peg.550"/>
<dbReference type="HOGENOM" id="CLU_042344_0_0_11"/>
<dbReference type="UniPathway" id="UPA00098">
    <property type="reaction ID" value="UER00361"/>
</dbReference>
<dbReference type="Proteomes" id="UP000001020">
    <property type="component" value="Chromosome"/>
</dbReference>
<dbReference type="GO" id="GO:0005737">
    <property type="term" value="C:cytoplasm"/>
    <property type="evidence" value="ECO:0007669"/>
    <property type="project" value="UniProtKB-SubCell"/>
</dbReference>
<dbReference type="GO" id="GO:0004735">
    <property type="term" value="F:pyrroline-5-carboxylate reductase activity"/>
    <property type="evidence" value="ECO:0007669"/>
    <property type="project" value="UniProtKB-UniRule"/>
</dbReference>
<dbReference type="GO" id="GO:0055129">
    <property type="term" value="P:L-proline biosynthetic process"/>
    <property type="evidence" value="ECO:0007669"/>
    <property type="project" value="UniProtKB-UniRule"/>
</dbReference>
<dbReference type="FunFam" id="1.10.3730.10:FF:000008">
    <property type="entry name" value="Pyrroline-5-carboxylate reductase"/>
    <property type="match status" value="1"/>
</dbReference>
<dbReference type="FunFam" id="3.40.50.720:FF:000915">
    <property type="entry name" value="Pyrroline-5-carboxylate reductase"/>
    <property type="match status" value="1"/>
</dbReference>
<dbReference type="Gene3D" id="3.40.50.720">
    <property type="entry name" value="NAD(P)-binding Rossmann-like Domain"/>
    <property type="match status" value="1"/>
</dbReference>
<dbReference type="Gene3D" id="1.10.3730.10">
    <property type="entry name" value="ProC C-terminal domain-like"/>
    <property type="match status" value="1"/>
</dbReference>
<dbReference type="HAMAP" id="MF_01925">
    <property type="entry name" value="P5C_reductase"/>
    <property type="match status" value="1"/>
</dbReference>
<dbReference type="InterPro" id="IPR008927">
    <property type="entry name" value="6-PGluconate_DH-like_C_sf"/>
</dbReference>
<dbReference type="InterPro" id="IPR036291">
    <property type="entry name" value="NAD(P)-bd_dom_sf"/>
</dbReference>
<dbReference type="InterPro" id="IPR028939">
    <property type="entry name" value="P5C_Rdtase_cat_N"/>
</dbReference>
<dbReference type="InterPro" id="IPR053790">
    <property type="entry name" value="P5CR-like_CS"/>
</dbReference>
<dbReference type="InterPro" id="IPR029036">
    <property type="entry name" value="P5CR_dimer"/>
</dbReference>
<dbReference type="InterPro" id="IPR000304">
    <property type="entry name" value="Pyrroline-COOH_reductase"/>
</dbReference>
<dbReference type="NCBIfam" id="TIGR00112">
    <property type="entry name" value="proC"/>
    <property type="match status" value="1"/>
</dbReference>
<dbReference type="PANTHER" id="PTHR11645">
    <property type="entry name" value="PYRROLINE-5-CARBOXYLATE REDUCTASE"/>
    <property type="match status" value="1"/>
</dbReference>
<dbReference type="PANTHER" id="PTHR11645:SF0">
    <property type="entry name" value="PYRROLINE-5-CARBOXYLATE REDUCTASE 3"/>
    <property type="match status" value="1"/>
</dbReference>
<dbReference type="Pfam" id="PF03807">
    <property type="entry name" value="F420_oxidored"/>
    <property type="match status" value="1"/>
</dbReference>
<dbReference type="Pfam" id="PF14748">
    <property type="entry name" value="P5CR_dimer"/>
    <property type="match status" value="1"/>
</dbReference>
<dbReference type="PIRSF" id="PIRSF000193">
    <property type="entry name" value="Pyrrol-5-carb_rd"/>
    <property type="match status" value="1"/>
</dbReference>
<dbReference type="SUPFAM" id="SSF48179">
    <property type="entry name" value="6-phosphogluconate dehydrogenase C-terminal domain-like"/>
    <property type="match status" value="1"/>
</dbReference>
<dbReference type="SUPFAM" id="SSF51735">
    <property type="entry name" value="NAD(P)-binding Rossmann-fold domains"/>
    <property type="match status" value="1"/>
</dbReference>
<dbReference type="PROSITE" id="PS00521">
    <property type="entry name" value="P5CR"/>
    <property type="match status" value="1"/>
</dbReference>
<gene>
    <name evidence="1" type="primary">proC</name>
    <name type="ordered locus">MT0520</name>
</gene>
<proteinExistence type="inferred from homology"/>
<feature type="chain" id="PRO_0000428120" description="Pyrroline-5-carboxylate reductase">
    <location>
        <begin position="1"/>
        <end position="295"/>
    </location>
</feature>
<protein>
    <recommendedName>
        <fullName evidence="1">Pyrroline-5-carboxylate reductase</fullName>
        <shortName evidence="1">P5C reductase</shortName>
        <shortName evidence="1">P5CR</shortName>
        <ecNumber evidence="1">1.5.1.2</ecNumber>
    </recommendedName>
    <alternativeName>
        <fullName evidence="1">PCA reductase</fullName>
    </alternativeName>
</protein>
<sequence>MLFGMARIAIIGGGSIGEALLSGLLRAGRQVKDLVVAERMPDRANYLAQTYSVLVTSAADAVENATFVVVAVKPADVEPVIADLANATAAAENDSAEQVFVTVVAGITIAYFESKLPAGTPVVRAMPNAAALVGAGVTALAKGRFVTPQQLEEVSALFDAVGGVLTVPESQLDAVTAVSGSGPAYFFLLVEALVDAGVGVGLSRQVATDLAAQTMAGSAAMLLERMEQDQGGANGELMGLRVDLTASRLRAAVTSPGGTTAAALRELERGGFRMAVDAAVQAAKSRSEQLRITPE</sequence>
<comment type="function">
    <text evidence="1">Catalyzes the reduction of 1-pyrroline-5-carboxylate (PCA) to L-proline.</text>
</comment>
<comment type="catalytic activity">
    <reaction evidence="1">
        <text>L-proline + NADP(+) = (S)-1-pyrroline-5-carboxylate + NADPH + 2 H(+)</text>
        <dbReference type="Rhea" id="RHEA:14109"/>
        <dbReference type="ChEBI" id="CHEBI:15378"/>
        <dbReference type="ChEBI" id="CHEBI:17388"/>
        <dbReference type="ChEBI" id="CHEBI:57783"/>
        <dbReference type="ChEBI" id="CHEBI:58349"/>
        <dbReference type="ChEBI" id="CHEBI:60039"/>
        <dbReference type="EC" id="1.5.1.2"/>
    </reaction>
</comment>
<comment type="catalytic activity">
    <reaction evidence="1">
        <text>L-proline + NAD(+) = (S)-1-pyrroline-5-carboxylate + NADH + 2 H(+)</text>
        <dbReference type="Rhea" id="RHEA:14105"/>
        <dbReference type="ChEBI" id="CHEBI:15378"/>
        <dbReference type="ChEBI" id="CHEBI:17388"/>
        <dbReference type="ChEBI" id="CHEBI:57540"/>
        <dbReference type="ChEBI" id="CHEBI:57945"/>
        <dbReference type="ChEBI" id="CHEBI:60039"/>
        <dbReference type="EC" id="1.5.1.2"/>
    </reaction>
</comment>
<comment type="pathway">
    <text evidence="1">Amino-acid biosynthesis; L-proline biosynthesis; L-proline from L-glutamate 5-semialdehyde: step 1/1.</text>
</comment>
<comment type="subcellular location">
    <subcellularLocation>
        <location evidence="1">Cytoplasm</location>
    </subcellularLocation>
</comment>
<comment type="similarity">
    <text evidence="1">Belongs to the pyrroline-5-carboxylate reductase family.</text>
</comment>
<evidence type="ECO:0000255" key="1">
    <source>
        <dbReference type="HAMAP-Rule" id="MF_01925"/>
    </source>
</evidence>
<organism>
    <name type="scientific">Mycobacterium tuberculosis (strain CDC 1551 / Oshkosh)</name>
    <dbReference type="NCBI Taxonomy" id="83331"/>
    <lineage>
        <taxon>Bacteria</taxon>
        <taxon>Bacillati</taxon>
        <taxon>Actinomycetota</taxon>
        <taxon>Actinomycetes</taxon>
        <taxon>Mycobacteriales</taxon>
        <taxon>Mycobacteriaceae</taxon>
        <taxon>Mycobacterium</taxon>
        <taxon>Mycobacterium tuberculosis complex</taxon>
    </lineage>
</organism>
<name>P5CR_MYCTO</name>
<reference key="1">
    <citation type="journal article" date="2002" name="J. Bacteriol.">
        <title>Whole-genome comparison of Mycobacterium tuberculosis clinical and laboratory strains.</title>
        <authorList>
            <person name="Fleischmann R.D."/>
            <person name="Alland D."/>
            <person name="Eisen J.A."/>
            <person name="Carpenter L."/>
            <person name="White O."/>
            <person name="Peterson J.D."/>
            <person name="DeBoy R.T."/>
            <person name="Dodson R.J."/>
            <person name="Gwinn M.L."/>
            <person name="Haft D.H."/>
            <person name="Hickey E.K."/>
            <person name="Kolonay J.F."/>
            <person name="Nelson W.C."/>
            <person name="Umayam L.A."/>
            <person name="Ermolaeva M.D."/>
            <person name="Salzberg S.L."/>
            <person name="Delcher A."/>
            <person name="Utterback T.R."/>
            <person name="Weidman J.F."/>
            <person name="Khouri H.M."/>
            <person name="Gill J."/>
            <person name="Mikula A."/>
            <person name="Bishai W."/>
            <person name="Jacobs W.R. Jr."/>
            <person name="Venter J.C."/>
            <person name="Fraser C.M."/>
        </authorList>
    </citation>
    <scope>NUCLEOTIDE SEQUENCE [LARGE SCALE GENOMIC DNA]</scope>
    <source>
        <strain>CDC 1551 / Oshkosh</strain>
    </source>
</reference>
<accession>P9WHU6</accession>
<accession>L0T3T3</accession>
<accession>Q11141</accession>